<comment type="function">
    <text evidence="1">NAD-binding protein involved in the addition of a carboxymethylaminomethyl (cmnm) group at the wobble position (U34) of certain tRNAs, forming tRNA-cmnm(5)s(2)U34.</text>
</comment>
<comment type="cofactor">
    <cofactor evidence="1">
        <name>FAD</name>
        <dbReference type="ChEBI" id="CHEBI:57692"/>
    </cofactor>
</comment>
<comment type="subunit">
    <text evidence="1">Homodimer. Heterotetramer of two MnmE and two MnmG subunits.</text>
</comment>
<comment type="subcellular location">
    <subcellularLocation>
        <location evidence="1">Cytoplasm</location>
    </subcellularLocation>
</comment>
<comment type="similarity">
    <text evidence="1">Belongs to the MnmG family.</text>
</comment>
<keyword id="KW-0963">Cytoplasm</keyword>
<keyword id="KW-0274">FAD</keyword>
<keyword id="KW-0285">Flavoprotein</keyword>
<keyword id="KW-0520">NAD</keyword>
<keyword id="KW-0819">tRNA processing</keyword>
<gene>
    <name evidence="1" type="primary">mnmG</name>
    <name evidence="1" type="synonym">gidA</name>
    <name type="ordered locus">FTH_0741</name>
</gene>
<reference key="1">
    <citation type="journal article" date="2006" name="J. Bacteriol.">
        <title>Chromosome rearrangement and diversification of Francisella tularensis revealed by the type B (OSU18) genome sequence.</title>
        <authorList>
            <person name="Petrosino J.F."/>
            <person name="Xiang Q."/>
            <person name="Karpathy S.E."/>
            <person name="Jiang H."/>
            <person name="Yerrapragada S."/>
            <person name="Liu Y."/>
            <person name="Gioia J."/>
            <person name="Hemphill L."/>
            <person name="Gonzalez A."/>
            <person name="Raghavan T.M."/>
            <person name="Uzman A."/>
            <person name="Fox G.E."/>
            <person name="Highlander S."/>
            <person name="Reichard M."/>
            <person name="Morton R.J."/>
            <person name="Clinkenbeard K.D."/>
            <person name="Weinstock G.M."/>
        </authorList>
    </citation>
    <scope>NUCLEOTIDE SEQUENCE [LARGE SCALE GENOMIC DNA]</scope>
    <source>
        <strain>OSU18</strain>
    </source>
</reference>
<proteinExistence type="inferred from homology"/>
<name>MNMG_FRATO</name>
<accession>Q0BMJ8</accession>
<evidence type="ECO:0000255" key="1">
    <source>
        <dbReference type="HAMAP-Rule" id="MF_00129"/>
    </source>
</evidence>
<dbReference type="EMBL" id="CP000437">
    <property type="protein sequence ID" value="ABI82686.1"/>
    <property type="molecule type" value="Genomic_DNA"/>
</dbReference>
<dbReference type="RefSeq" id="WP_003015250.1">
    <property type="nucleotide sequence ID" value="NC_017463.1"/>
</dbReference>
<dbReference type="SMR" id="Q0BMJ8"/>
<dbReference type="KEGG" id="fth:FTH_0741"/>
<dbReference type="GO" id="GO:0005829">
    <property type="term" value="C:cytosol"/>
    <property type="evidence" value="ECO:0007669"/>
    <property type="project" value="TreeGrafter"/>
</dbReference>
<dbReference type="GO" id="GO:0050660">
    <property type="term" value="F:flavin adenine dinucleotide binding"/>
    <property type="evidence" value="ECO:0007669"/>
    <property type="project" value="UniProtKB-UniRule"/>
</dbReference>
<dbReference type="GO" id="GO:0030488">
    <property type="term" value="P:tRNA methylation"/>
    <property type="evidence" value="ECO:0007669"/>
    <property type="project" value="TreeGrafter"/>
</dbReference>
<dbReference type="GO" id="GO:0002098">
    <property type="term" value="P:tRNA wobble uridine modification"/>
    <property type="evidence" value="ECO:0007669"/>
    <property type="project" value="InterPro"/>
</dbReference>
<dbReference type="FunFam" id="1.10.10.1800:FF:000001">
    <property type="entry name" value="tRNA uridine 5-carboxymethylaminomethyl modification enzyme MnmG"/>
    <property type="match status" value="1"/>
</dbReference>
<dbReference type="FunFam" id="1.10.150.570:FF:000001">
    <property type="entry name" value="tRNA uridine 5-carboxymethylaminomethyl modification enzyme MnmG"/>
    <property type="match status" value="1"/>
</dbReference>
<dbReference type="FunFam" id="3.50.50.60:FF:000002">
    <property type="entry name" value="tRNA uridine 5-carboxymethylaminomethyl modification enzyme MnmG"/>
    <property type="match status" value="1"/>
</dbReference>
<dbReference type="FunFam" id="3.50.50.60:FF:000010">
    <property type="entry name" value="tRNA uridine 5-carboxymethylaminomethyl modification enzyme MnmG"/>
    <property type="match status" value="1"/>
</dbReference>
<dbReference type="Gene3D" id="3.50.50.60">
    <property type="entry name" value="FAD/NAD(P)-binding domain"/>
    <property type="match status" value="2"/>
</dbReference>
<dbReference type="Gene3D" id="1.10.150.570">
    <property type="entry name" value="GidA associated domain, C-terminal subdomain"/>
    <property type="match status" value="1"/>
</dbReference>
<dbReference type="Gene3D" id="1.10.10.1800">
    <property type="entry name" value="tRNA uridine 5-carboxymethylaminomethyl modification enzyme MnmG/GidA"/>
    <property type="match status" value="1"/>
</dbReference>
<dbReference type="HAMAP" id="MF_00129">
    <property type="entry name" value="MnmG_GidA"/>
    <property type="match status" value="1"/>
</dbReference>
<dbReference type="InterPro" id="IPR036188">
    <property type="entry name" value="FAD/NAD-bd_sf"/>
</dbReference>
<dbReference type="InterPro" id="IPR049312">
    <property type="entry name" value="GIDA_C_N"/>
</dbReference>
<dbReference type="InterPro" id="IPR004416">
    <property type="entry name" value="MnmG"/>
</dbReference>
<dbReference type="InterPro" id="IPR002218">
    <property type="entry name" value="MnmG-rel"/>
</dbReference>
<dbReference type="InterPro" id="IPR020595">
    <property type="entry name" value="MnmG-rel_CS"/>
</dbReference>
<dbReference type="InterPro" id="IPR026904">
    <property type="entry name" value="MnmG_C"/>
</dbReference>
<dbReference type="InterPro" id="IPR047001">
    <property type="entry name" value="MnmG_C_subdom"/>
</dbReference>
<dbReference type="InterPro" id="IPR044920">
    <property type="entry name" value="MnmG_C_subdom_sf"/>
</dbReference>
<dbReference type="InterPro" id="IPR040131">
    <property type="entry name" value="MnmG_N"/>
</dbReference>
<dbReference type="NCBIfam" id="TIGR00136">
    <property type="entry name" value="mnmG_gidA"/>
    <property type="match status" value="1"/>
</dbReference>
<dbReference type="PANTHER" id="PTHR11806">
    <property type="entry name" value="GLUCOSE INHIBITED DIVISION PROTEIN A"/>
    <property type="match status" value="1"/>
</dbReference>
<dbReference type="PANTHER" id="PTHR11806:SF0">
    <property type="entry name" value="PROTEIN MTO1 HOMOLOG, MITOCHONDRIAL"/>
    <property type="match status" value="1"/>
</dbReference>
<dbReference type="Pfam" id="PF01134">
    <property type="entry name" value="GIDA"/>
    <property type="match status" value="1"/>
</dbReference>
<dbReference type="Pfam" id="PF21680">
    <property type="entry name" value="GIDA_C_1st"/>
    <property type="match status" value="1"/>
</dbReference>
<dbReference type="Pfam" id="PF13932">
    <property type="entry name" value="SAM_GIDA_C"/>
    <property type="match status" value="1"/>
</dbReference>
<dbReference type="SMART" id="SM01228">
    <property type="entry name" value="GIDA_assoc_3"/>
    <property type="match status" value="1"/>
</dbReference>
<dbReference type="SUPFAM" id="SSF51905">
    <property type="entry name" value="FAD/NAD(P)-binding domain"/>
    <property type="match status" value="1"/>
</dbReference>
<dbReference type="PROSITE" id="PS01280">
    <property type="entry name" value="GIDA_1"/>
    <property type="match status" value="1"/>
</dbReference>
<feature type="chain" id="PRO_1000016601" description="tRNA uridine 5-carboxymethylaminomethyl modification enzyme MnmG">
    <location>
        <begin position="1"/>
        <end position="627"/>
    </location>
</feature>
<feature type="binding site" evidence="1">
    <location>
        <begin position="13"/>
        <end position="18"/>
    </location>
    <ligand>
        <name>FAD</name>
        <dbReference type="ChEBI" id="CHEBI:57692"/>
    </ligand>
</feature>
<feature type="binding site" evidence="1">
    <location>
        <position position="125"/>
    </location>
    <ligand>
        <name>FAD</name>
        <dbReference type="ChEBI" id="CHEBI:57692"/>
    </ligand>
</feature>
<feature type="binding site" evidence="1">
    <location>
        <position position="180"/>
    </location>
    <ligand>
        <name>FAD</name>
        <dbReference type="ChEBI" id="CHEBI:57692"/>
    </ligand>
</feature>
<feature type="binding site" evidence="1">
    <location>
        <begin position="274"/>
        <end position="288"/>
    </location>
    <ligand>
        <name>NAD(+)</name>
        <dbReference type="ChEBI" id="CHEBI:57540"/>
    </ligand>
</feature>
<feature type="binding site" evidence="1">
    <location>
        <position position="371"/>
    </location>
    <ligand>
        <name>FAD</name>
        <dbReference type="ChEBI" id="CHEBI:57692"/>
    </ligand>
</feature>
<sequence length="627" mass="69765">MIYDYGYDVIVVGGGHAGVEAASASARIGAKTLLLTHNIDTIGQMSCNPAIGGIGKGHLVKEIDAMGGVMAKAIDMAGIQFRILNSRKGPAVRATRAQADRVLYKKAINSLINNQENLDIFQDSVDDLVVENNTVCGAITKTGITFRAKKVVLTVGTFLGGKIHIGKVSNAGGRAGDQPSNALAARLRSLPFRVDRLKTGTPPRIDRRSVDFSVMEVQHGDNPTPYFSFFSKGKIEHPRQIPCYITYTNNETHKIITDNLDKSAMYSGLIEGIGPRYCPSIEDKVVRFADKERHQIFVEPEGLNSIELYPNGLSTSLPFEVQCNYIRSIKGFEKAFIMRPGYAIEYDFFDPRDLKPTLETKHIKNLYFAGQINGTTGYEEAGAQGLVASINAAISIDSDKSWYPTRADSYIGVLIDDLITKGTKEPYRMFTSRAEYRLILREDNADLRLSDKACELGLLSKEDQQHFISKKNAIIENIAMMKNTWIGPQTQKARDLEKFLDKKMTRESTLFDLLKRPEIDYSKLQQISELNLNLQDDAVIEQIEISAKYSGYIERQNKDIEKTATLEQKAIPTDFNYSQVKGLSNEVLQKLTEQKPTTLGEASRIPGITPAAISLLTIYMKKTGFIK</sequence>
<organism>
    <name type="scientific">Francisella tularensis subsp. holarctica (strain OSU18)</name>
    <dbReference type="NCBI Taxonomy" id="393011"/>
    <lineage>
        <taxon>Bacteria</taxon>
        <taxon>Pseudomonadati</taxon>
        <taxon>Pseudomonadota</taxon>
        <taxon>Gammaproteobacteria</taxon>
        <taxon>Thiotrichales</taxon>
        <taxon>Francisellaceae</taxon>
        <taxon>Francisella</taxon>
    </lineage>
</organism>
<protein>
    <recommendedName>
        <fullName evidence="1">tRNA uridine 5-carboxymethylaminomethyl modification enzyme MnmG</fullName>
    </recommendedName>
    <alternativeName>
        <fullName evidence="1">Glucose-inhibited division protein A</fullName>
    </alternativeName>
</protein>